<keyword id="KW-0130">Cell adhesion</keyword>
<keyword id="KW-0998">Cell outer membrane</keyword>
<keyword id="KW-0281">Fimbrium</keyword>
<keyword id="KW-0449">Lipoprotein</keyword>
<keyword id="KW-0472">Membrane</keyword>
<keyword id="KW-0564">Palmitate</keyword>
<keyword id="KW-0732">Signal</keyword>
<keyword id="KW-0843">Virulence</keyword>
<accession>Q93R80</accession>
<reference key="1">
    <citation type="submission" date="2001-03" db="EMBL/GenBank/DDBJ databases">
        <title>Identification of a new fimA gene of Porphyromonas gingivalis and its distribution in Janapanese adult and disables population with periodontitis.</title>
        <authorList>
            <person name="Nakagawa I."/>
            <person name="Amano A."/>
            <person name="Ohara-Nemoto T."/>
            <person name="Endoh N."/>
            <person name="Morisaki I."/>
            <person name="Kimura S."/>
            <person name="Hamada S."/>
        </authorList>
    </citation>
    <scope>NUCLEOTIDE SEQUENCE [GENOMIC DNA]</scope>
    <source>
        <strain>HG1691</strain>
    </source>
</reference>
<proteinExistence type="inferred from homology"/>
<dbReference type="EMBL" id="AB058848">
    <property type="protein sequence ID" value="BAB61734.1"/>
    <property type="status" value="ALT_INIT"/>
    <property type="molecule type" value="Genomic_DNA"/>
</dbReference>
<dbReference type="SMR" id="Q93R80"/>
<dbReference type="GO" id="GO:0009279">
    <property type="term" value="C:cell outer membrane"/>
    <property type="evidence" value="ECO:0007669"/>
    <property type="project" value="UniProtKB-SubCell"/>
</dbReference>
<dbReference type="GO" id="GO:0009289">
    <property type="term" value="C:pilus"/>
    <property type="evidence" value="ECO:0000250"/>
    <property type="project" value="UniProtKB"/>
</dbReference>
<dbReference type="GO" id="GO:0005198">
    <property type="term" value="F:structural molecule activity"/>
    <property type="evidence" value="ECO:0007669"/>
    <property type="project" value="InterPro"/>
</dbReference>
<dbReference type="GO" id="GO:0007155">
    <property type="term" value="P:cell adhesion"/>
    <property type="evidence" value="ECO:0007669"/>
    <property type="project" value="UniProtKB-KW"/>
</dbReference>
<dbReference type="FunFam" id="2.60.40.2580:FF:000001">
    <property type="entry name" value="Major fimbrium subunit FimA type-2"/>
    <property type="match status" value="1"/>
</dbReference>
<dbReference type="FunFam" id="2.60.40.3690:FF:000001">
    <property type="entry name" value="Major fimbrium subunit FimA type-4"/>
    <property type="match status" value="1"/>
</dbReference>
<dbReference type="Gene3D" id="2.60.40.2580">
    <property type="match status" value="1"/>
</dbReference>
<dbReference type="Gene3D" id="2.60.40.3690">
    <property type="match status" value="1"/>
</dbReference>
<dbReference type="InterPro" id="IPR053878">
    <property type="entry name" value="FimA_C"/>
</dbReference>
<dbReference type="InterPro" id="IPR029141">
    <property type="entry name" value="FimA_N"/>
</dbReference>
<dbReference type="InterPro" id="IPR008110">
    <property type="entry name" value="Fimbrillin"/>
</dbReference>
<dbReference type="Pfam" id="PF22492">
    <property type="entry name" value="FimA4_C"/>
    <property type="match status" value="1"/>
</dbReference>
<dbReference type="Pfam" id="PF06321">
    <property type="entry name" value="P_gingi_FimA"/>
    <property type="match status" value="1"/>
</dbReference>
<dbReference type="PRINTS" id="PR01737">
    <property type="entry name" value="FIMBRILLIN"/>
</dbReference>
<dbReference type="PROSITE" id="PS51257">
    <property type="entry name" value="PROKAR_LIPOPROTEIN"/>
    <property type="match status" value="1"/>
</dbReference>
<feature type="signal peptide" evidence="3">
    <location>
        <begin position="1"/>
        <end position="18"/>
    </location>
</feature>
<feature type="propeptide" id="PRO_0000009158" evidence="1">
    <location>
        <begin position="19"/>
        <end position="46"/>
    </location>
</feature>
<feature type="chain" id="PRO_0000009159" description="Major fimbrium subunit FimA type Ib">
    <location>
        <begin position="47"/>
        <end position="383"/>
    </location>
</feature>
<feature type="region of interest" description="Important for oligomerization and fimbrium assembly" evidence="2">
    <location>
        <begin position="374"/>
        <end position="383"/>
    </location>
</feature>
<feature type="site" description="Cleavage; by gingipain" evidence="1">
    <location>
        <begin position="46"/>
        <end position="47"/>
    </location>
</feature>
<feature type="lipid moiety-binding region" description="N-palmitoyl cysteine" evidence="3">
    <location>
        <position position="19"/>
    </location>
</feature>
<feature type="lipid moiety-binding region" description="S-diacylglycerol cysteine" evidence="3">
    <location>
        <position position="19"/>
    </location>
</feature>
<evidence type="ECO:0000250" key="1">
    <source>
        <dbReference type="UniProtKB" id="B2RH54"/>
    </source>
</evidence>
<evidence type="ECO:0000250" key="2">
    <source>
        <dbReference type="UniProtKB" id="P59914"/>
    </source>
</evidence>
<evidence type="ECO:0000255" key="3">
    <source>
        <dbReference type="PROSITE-ProRule" id="PRU00303"/>
    </source>
</evidence>
<evidence type="ECO:0000305" key="4"/>
<sequence length="383" mass="41457">MKKTKFFLLGLAALAMTACNKDNEAEPVTEGNATISVVLKTSNSNRAFGVGDDESKVAKLTVMVYNGEQQEAIKSAENATKVEDIKCSAGQRTLVVMANTGAMELVGKTLAEVKALTTELTAENQEAAGLIMTAEPKTIVLKAGKNYIGYSGTGEGNHIENDPLKIKRVHARMAFTEIKVQMSAAYDNIYTFVPEKIYGLIAKKQSNLFGATLVNADANYLTGSLTTFNGAYTPANYANVPWLSRDYIAPTADAPQGFYVLENDYSANSGTIHPTILCVYGKLQKNGADLTGTDLAAAQAANWVDGQGKTYYPVLVNFNSNNYTYDNGYTPKNKIERNHKYDIKLTITGPGTNNPENPITESAHLNVQCTVAEWVLVGQNATW</sequence>
<protein>
    <recommendedName>
        <fullName>Major fimbrium subunit FimA type Ib</fullName>
    </recommendedName>
    <alternativeName>
        <fullName>Fimbrillin</fullName>
        <shortName>Fimbrilin</shortName>
    </alternativeName>
</protein>
<name>FIMA6_PORGN</name>
<gene>
    <name type="primary">fimA</name>
</gene>
<comment type="function">
    <text evidence="1">Structural subunit of the major fimbriae. These long, filamentous pili are attached to the cell surface; they mediate biofilm formation, adhesion onto host cells and onto other bacteria that are part of the oral microbiome. They play an important role in the invasion of periodontal tissues. Fimbriae and their constituents are major virulence factors. FimA proteins from different strains have highly divergent sequences, and this has been used for classification. The sequence-based classification correlates with pathogenicity.</text>
</comment>
<comment type="subunit">
    <text evidence="1 2">Fimbriae are composed of a major, structural subunit (FimA) and the minor components FimC, FimD and FimE (By similarity). Head-to-tail oligomerization of FimA molecules mediates assembly of the fimbrium stalk, while the minor components probably form the fimbrium tip. Linear, head-to-tail oligomerization of FimA is mediated by a conformation change, facilitating the insertion of a C-terminal beta-strand into a groove in the N-terminal domain of the following subunit (By similarity).</text>
</comment>
<comment type="subcellular location">
    <subcellularLocation>
        <location evidence="1">Fimbrium</location>
    </subcellularLocation>
    <subcellularLocation>
        <location evidence="1">Cell outer membrane</location>
    </subcellularLocation>
    <text evidence="1">Synthesized as palmitoylated precursor. The lipidated propeptide is removed during processing to the mature protein.</text>
</comment>
<comment type="PTM">
    <text evidence="1">Synthesized as palmitoylated lipoprotein precursor. Efficient export to the outer membrane and integration into fimbriae requires lipidation and subsequent proteolytic removal of the lipidated propeptide.</text>
</comment>
<comment type="miscellaneous">
    <text evidence="4">The name (major fimbrium subunit) does not indicate the abundance of the protein, but is derived from the greater length of the major fimbriae. In strain ATCC 33277 and strain ATCC BAA-1703 / FDC 381, major fimbriae are 300 - 1600 nM in length and about 5 nm in diameter. In contrast, minor fimbriae are only about 80 - 120 nm long. This length difference is observed only in a small number of strains, including strain ATCC 33277 and strain ATCC BAA-1703 / FDC 381, and is due to a loss of function mutation in FimB, a protein that restricts fimbrial length in other strains.</text>
</comment>
<comment type="similarity">
    <text evidence="4">Belongs to the bacteroidetes fimbrillin superfamily. FimA/Mfa1 family.</text>
</comment>
<comment type="sequence caution" evidence="4">
    <conflict type="erroneous initiation">
        <sequence resource="EMBL-CDS" id="BAB61734"/>
    </conflict>
    <text>Truncated N-terminus.</text>
</comment>
<organism>
    <name type="scientific">Porphyromonas gingivalis</name>
    <name type="common">Bacteroides gingivalis</name>
    <dbReference type="NCBI Taxonomy" id="837"/>
    <lineage>
        <taxon>Bacteria</taxon>
        <taxon>Pseudomonadati</taxon>
        <taxon>Bacteroidota</taxon>
        <taxon>Bacteroidia</taxon>
        <taxon>Bacteroidales</taxon>
        <taxon>Porphyromonadaceae</taxon>
        <taxon>Porphyromonas</taxon>
    </lineage>
</organism>